<comment type="catalytic activity">
    <reaction>
        <text>DNA(n) + a 2'-deoxyribonucleoside 5'-triphosphate = DNA(n+1) + diphosphate</text>
        <dbReference type="Rhea" id="RHEA:22508"/>
        <dbReference type="Rhea" id="RHEA-COMP:17339"/>
        <dbReference type="Rhea" id="RHEA-COMP:17340"/>
        <dbReference type="ChEBI" id="CHEBI:33019"/>
        <dbReference type="ChEBI" id="CHEBI:61560"/>
        <dbReference type="ChEBI" id="CHEBI:173112"/>
        <dbReference type="EC" id="2.7.7.7"/>
    </reaction>
</comment>
<comment type="similarity">
    <text evidence="1">Belongs to the DNA polymerase type-B family.</text>
</comment>
<reference key="1">
    <citation type="submission" date="1995-09" db="EMBL/GenBank/DDBJ databases">
        <authorList>
            <person name="Cambon M."/>
            <person name="Querellou J."/>
            <person name="Barbier G."/>
            <person name="Dietrich J."/>
            <person name="Forterre P."/>
        </authorList>
    </citation>
    <scope>NUCLEOTIDE SEQUENCE [GENOMIC DNA]</scope>
    <source>
        <strain>ST 855</strain>
    </source>
</reference>
<reference key="2">
    <citation type="submission" date="1995-09" db="EMBL/GenBank/DDBJ databases">
        <authorList>
            <person name="Cambon M."/>
            <person name="Querellou J."/>
            <person name="Bouyoub A."/>
            <person name="Raguenes G."/>
            <person name="Barbier G."/>
            <person name="Forterre P."/>
            <person name="Dietrich J."/>
        </authorList>
    </citation>
    <scope>NUCLEOTIDE SEQUENCE [GENOMIC DNA]</scope>
    <source>
        <strain>GE23</strain>
    </source>
</reference>
<dbReference type="EC" id="2.7.7.7"/>
<dbReference type="EMBL" id="Z54174">
    <property type="protein sequence ID" value="CAA90888.1"/>
    <property type="molecule type" value="Genomic_DNA"/>
</dbReference>
<dbReference type="EMBL" id="Z54173">
    <property type="protein sequence ID" value="CAA90887.1"/>
    <property type="molecule type" value="Genomic_DNA"/>
</dbReference>
<dbReference type="PDB" id="4FLU">
    <property type="method" value="X-ray"/>
    <property type="resolution" value="3.10 A"/>
    <property type="chains" value="A=1-771"/>
</dbReference>
<dbReference type="PDBsum" id="4FLU"/>
<dbReference type="SMR" id="P0CL76"/>
<dbReference type="BRENDA" id="2.7.7.7">
    <property type="organism ID" value="5242"/>
</dbReference>
<dbReference type="EvolutionaryTrace" id="P0CL76"/>
<dbReference type="GO" id="GO:0003677">
    <property type="term" value="F:DNA binding"/>
    <property type="evidence" value="ECO:0007669"/>
    <property type="project" value="UniProtKB-KW"/>
</dbReference>
<dbReference type="GO" id="GO:0003887">
    <property type="term" value="F:DNA-directed DNA polymerase activity"/>
    <property type="evidence" value="ECO:0007669"/>
    <property type="project" value="UniProtKB-KW"/>
</dbReference>
<dbReference type="GO" id="GO:0000166">
    <property type="term" value="F:nucleotide binding"/>
    <property type="evidence" value="ECO:0007669"/>
    <property type="project" value="InterPro"/>
</dbReference>
<dbReference type="GO" id="GO:0006261">
    <property type="term" value="P:DNA-templated DNA replication"/>
    <property type="evidence" value="ECO:0007669"/>
    <property type="project" value="TreeGrafter"/>
</dbReference>
<dbReference type="CDD" id="cd05780">
    <property type="entry name" value="DNA_polB_Kod1_like_exo"/>
    <property type="match status" value="1"/>
</dbReference>
<dbReference type="CDD" id="cd05536">
    <property type="entry name" value="POLBc_B3"/>
    <property type="match status" value="1"/>
</dbReference>
<dbReference type="FunFam" id="3.30.342.10:FF:000015">
    <property type="entry name" value="DNA polymerase"/>
    <property type="match status" value="1"/>
</dbReference>
<dbReference type="FunFam" id="1.10.132.60:FF:000013">
    <property type="entry name" value="DNA polymerase Pol2"/>
    <property type="match status" value="1"/>
</dbReference>
<dbReference type="Gene3D" id="1.10.132.60">
    <property type="entry name" value="DNA polymerase family B, C-terminal domain"/>
    <property type="match status" value="1"/>
</dbReference>
<dbReference type="Gene3D" id="3.30.342.10">
    <property type="entry name" value="DNA Polymerase, chain B, domain 1"/>
    <property type="match status" value="1"/>
</dbReference>
<dbReference type="Gene3D" id="1.10.287.690">
    <property type="entry name" value="Helix hairpin bin"/>
    <property type="match status" value="1"/>
</dbReference>
<dbReference type="Gene3D" id="3.90.1600.10">
    <property type="entry name" value="Palm domain of DNA polymerase"/>
    <property type="match status" value="1"/>
</dbReference>
<dbReference type="Gene3D" id="3.30.420.10">
    <property type="entry name" value="Ribonuclease H-like superfamily/Ribonuclease H"/>
    <property type="match status" value="1"/>
</dbReference>
<dbReference type="InterPro" id="IPR006172">
    <property type="entry name" value="DNA-dir_DNA_pol_B"/>
</dbReference>
<dbReference type="InterPro" id="IPR017964">
    <property type="entry name" value="DNA-dir_DNA_pol_B_CS"/>
</dbReference>
<dbReference type="InterPro" id="IPR006133">
    <property type="entry name" value="DNA-dir_DNA_pol_B_exonuc"/>
</dbReference>
<dbReference type="InterPro" id="IPR006134">
    <property type="entry name" value="DNA-dir_DNA_pol_B_multi_dom"/>
</dbReference>
<dbReference type="InterPro" id="IPR043502">
    <property type="entry name" value="DNA/RNA_pol_sf"/>
</dbReference>
<dbReference type="InterPro" id="IPR042087">
    <property type="entry name" value="DNA_pol_B_thumb"/>
</dbReference>
<dbReference type="InterPro" id="IPR023211">
    <property type="entry name" value="DNA_pol_palm_dom_sf"/>
</dbReference>
<dbReference type="InterPro" id="IPR050240">
    <property type="entry name" value="DNA_pol_type-B"/>
</dbReference>
<dbReference type="InterPro" id="IPR012337">
    <property type="entry name" value="RNaseH-like_sf"/>
</dbReference>
<dbReference type="InterPro" id="IPR036397">
    <property type="entry name" value="RNaseH_sf"/>
</dbReference>
<dbReference type="NCBIfam" id="TIGR00592">
    <property type="entry name" value="pol2"/>
    <property type="match status" value="2"/>
</dbReference>
<dbReference type="PANTHER" id="PTHR10322">
    <property type="entry name" value="DNA POLYMERASE CATALYTIC SUBUNIT"/>
    <property type="match status" value="1"/>
</dbReference>
<dbReference type="PANTHER" id="PTHR10322:SF23">
    <property type="entry name" value="DNA POLYMERASE DELTA CATALYTIC SUBUNIT"/>
    <property type="match status" value="1"/>
</dbReference>
<dbReference type="Pfam" id="PF00136">
    <property type="entry name" value="DNA_pol_B"/>
    <property type="match status" value="1"/>
</dbReference>
<dbReference type="Pfam" id="PF03104">
    <property type="entry name" value="DNA_pol_B_exo1"/>
    <property type="match status" value="1"/>
</dbReference>
<dbReference type="PRINTS" id="PR00106">
    <property type="entry name" value="DNAPOLB"/>
</dbReference>
<dbReference type="SMART" id="SM00486">
    <property type="entry name" value="POLBc"/>
    <property type="match status" value="1"/>
</dbReference>
<dbReference type="SUPFAM" id="SSF56672">
    <property type="entry name" value="DNA/RNA polymerases"/>
    <property type="match status" value="1"/>
</dbReference>
<dbReference type="SUPFAM" id="SSF53098">
    <property type="entry name" value="Ribonuclease H-like"/>
    <property type="match status" value="1"/>
</dbReference>
<dbReference type="PROSITE" id="PS00116">
    <property type="entry name" value="DNA_POLYMERASE_B"/>
    <property type="match status" value="1"/>
</dbReference>
<protein>
    <recommendedName>
        <fullName>DNA polymerase 1</fullName>
        <ecNumber>2.7.7.7</ecNumber>
    </recommendedName>
    <alternativeName>
        <fullName>Pab polymerase</fullName>
    </alternativeName>
</protein>
<evidence type="ECO:0000305" key="1"/>
<evidence type="ECO:0007829" key="2">
    <source>
        <dbReference type="PDB" id="4FLU"/>
    </source>
</evidence>
<accession>P0CL76</accession>
<accession>P77916</accession>
<accession>P77932</accession>
<proteinExistence type="evidence at protein level"/>
<organism>
    <name type="scientific">Pyrococcus abyssi</name>
    <dbReference type="NCBI Taxonomy" id="29292"/>
    <lineage>
        <taxon>Archaea</taxon>
        <taxon>Methanobacteriati</taxon>
        <taxon>Methanobacteriota</taxon>
        <taxon>Thermococci</taxon>
        <taxon>Thermococcales</taxon>
        <taxon>Thermococcaceae</taxon>
        <taxon>Pyrococcus</taxon>
    </lineage>
</organism>
<name>DPOL_PYRAY</name>
<feature type="chain" id="PRO_0000046479" description="DNA polymerase 1">
    <location>
        <begin position="1"/>
        <end position="771"/>
    </location>
</feature>
<feature type="sequence variant" description="In strain: ST 855.">
    <original>V</original>
    <variation>A</variation>
    <location>
        <position position="263"/>
    </location>
</feature>
<feature type="sequence variant" description="In strain: ST 855.">
    <original>A</original>
    <variation>T</variation>
    <location>
        <position position="277"/>
    </location>
</feature>
<feature type="sequence variant" description="In strain: ST 855.">
    <original>A</original>
    <variation>V</variation>
    <location>
        <position position="281"/>
    </location>
</feature>
<feature type="sequence variant" description="In strain: ST 855.">
    <original>F</original>
    <variation>S</variation>
    <location>
        <position position="320"/>
    </location>
</feature>
<feature type="sequence variant" description="In strain: ST 855.">
    <original>Q</original>
    <variation>H</variation>
    <location>
        <position position="339"/>
    </location>
</feature>
<feature type="sequence variant" description="In strain: ST 855.">
    <original>R</original>
    <variation>T</variation>
    <location>
        <position position="359"/>
    </location>
</feature>
<feature type="sequence variant" description="In strain: ST 855.">
    <original>K</original>
    <variation>N</variation>
    <location>
        <position position="391"/>
    </location>
</feature>
<feature type="sequence variant" description="In strain: ST 855.">
    <original>S</original>
    <variation>R</variation>
    <location>
        <position position="532"/>
    </location>
</feature>
<feature type="sequence variant" description="In strain: ST 855.">
    <original>PN</original>
    <variation>HE</variation>
    <location>
        <begin position="553"/>
        <end position="554"/>
    </location>
</feature>
<feature type="strand" evidence="2">
    <location>
        <begin position="1"/>
        <end position="10"/>
    </location>
</feature>
<feature type="strand" evidence="2">
    <location>
        <begin position="13"/>
        <end position="22"/>
    </location>
</feature>
<feature type="strand" evidence="2">
    <location>
        <begin position="25"/>
        <end position="32"/>
    </location>
</feature>
<feature type="strand" evidence="2">
    <location>
        <begin position="37"/>
        <end position="44"/>
    </location>
</feature>
<feature type="helix" evidence="2">
    <location>
        <begin position="45"/>
        <end position="47"/>
    </location>
</feature>
<feature type="helix" evidence="2">
    <location>
        <begin position="48"/>
        <end position="51"/>
    </location>
</feature>
<feature type="strand" evidence="2">
    <location>
        <begin position="55"/>
        <end position="58"/>
    </location>
</feature>
<feature type="strand" evidence="2">
    <location>
        <begin position="61"/>
        <end position="64"/>
    </location>
</feature>
<feature type="strand" evidence="2">
    <location>
        <begin position="67"/>
        <end position="75"/>
    </location>
</feature>
<feature type="strand" evidence="2">
    <location>
        <begin position="78"/>
        <end position="86"/>
    </location>
</feature>
<feature type="helix" evidence="2">
    <location>
        <begin position="92"/>
        <end position="101"/>
    </location>
</feature>
<feature type="strand" evidence="2">
    <location>
        <begin position="106"/>
        <end position="111"/>
    </location>
</feature>
<feature type="helix" evidence="2">
    <location>
        <begin position="116"/>
        <end position="123"/>
    </location>
</feature>
<feature type="strand" evidence="2">
    <location>
        <begin position="137"/>
        <end position="144"/>
    </location>
</feature>
<feature type="strand" evidence="2">
    <location>
        <begin position="157"/>
        <end position="164"/>
    </location>
</feature>
<feature type="strand" evidence="2">
    <location>
        <begin position="167"/>
        <end position="174"/>
    </location>
</feature>
<feature type="strand" evidence="2">
    <location>
        <begin position="181"/>
        <end position="183"/>
    </location>
</feature>
<feature type="helix" evidence="2">
    <location>
        <begin position="187"/>
        <end position="201"/>
    </location>
</feature>
<feature type="strand" evidence="2">
    <location>
        <begin position="204"/>
        <end position="210"/>
    </location>
</feature>
<feature type="turn" evidence="2">
    <location>
        <begin position="211"/>
        <end position="214"/>
    </location>
</feature>
<feature type="helix" evidence="2">
    <location>
        <begin position="215"/>
        <end position="226"/>
    </location>
</feature>
<feature type="strand" evidence="2">
    <location>
        <begin position="240"/>
        <end position="244"/>
    </location>
</feature>
<feature type="strand" evidence="2">
    <location>
        <begin position="247"/>
        <end position="251"/>
    </location>
</feature>
<feature type="strand" evidence="2">
    <location>
        <begin position="255"/>
        <end position="259"/>
    </location>
</feature>
<feature type="helix" evidence="2">
    <location>
        <begin position="260"/>
        <end position="267"/>
    </location>
</feature>
<feature type="helix" evidence="2">
    <location>
        <begin position="275"/>
        <end position="283"/>
    </location>
</feature>
<feature type="helix" evidence="2">
    <location>
        <begin position="292"/>
        <end position="301"/>
    </location>
</feature>
<feature type="helix" evidence="2">
    <location>
        <begin position="305"/>
        <end position="337"/>
    </location>
</feature>
<feature type="helix" evidence="2">
    <location>
        <begin position="341"/>
        <end position="345"/>
    </location>
</feature>
<feature type="helix" evidence="2">
    <location>
        <begin position="349"/>
        <end position="363"/>
    </location>
</feature>
<feature type="helix" evidence="2">
    <location>
        <begin position="374"/>
        <end position="381"/>
    </location>
</feature>
<feature type="strand" evidence="2">
    <location>
        <begin position="398"/>
        <end position="405"/>
    </location>
</feature>
<feature type="helix" evidence="2">
    <location>
        <begin position="407"/>
        <end position="409"/>
    </location>
</feature>
<feature type="helix" evidence="2">
    <location>
        <begin position="410"/>
        <end position="416"/>
    </location>
</feature>
<feature type="turn" evidence="2">
    <location>
        <begin position="421"/>
        <end position="423"/>
    </location>
</feature>
<feature type="strand" evidence="2">
    <location>
        <begin position="430"/>
        <end position="434"/>
    </location>
</feature>
<feature type="turn" evidence="2">
    <location>
        <begin position="436"/>
        <end position="438"/>
    </location>
</feature>
<feature type="strand" evidence="2">
    <location>
        <begin position="441"/>
        <end position="443"/>
    </location>
</feature>
<feature type="helix" evidence="2">
    <location>
        <begin position="449"/>
        <end position="469"/>
    </location>
</feature>
<feature type="helix" evidence="2">
    <location>
        <begin position="474"/>
        <end position="491"/>
    </location>
</feature>
<feature type="helix" evidence="2">
    <location>
        <begin position="494"/>
        <end position="498"/>
    </location>
</feature>
<feature type="helix" evidence="2">
    <location>
        <begin position="508"/>
        <end position="531"/>
    </location>
</feature>
<feature type="strand" evidence="2">
    <location>
        <begin position="535"/>
        <end position="539"/>
    </location>
</feature>
<feature type="strand" evidence="2">
    <location>
        <begin position="541"/>
        <end position="547"/>
    </location>
</feature>
<feature type="helix" evidence="2">
    <location>
        <begin position="553"/>
        <end position="570"/>
    </location>
</feature>
<feature type="strand" evidence="2">
    <location>
        <begin position="578"/>
        <end position="590"/>
    </location>
</feature>
<feature type="strand" evidence="2">
    <location>
        <begin position="593"/>
        <end position="597"/>
    </location>
</feature>
<feature type="strand" evidence="2">
    <location>
        <begin position="603"/>
        <end position="607"/>
    </location>
</feature>
<feature type="helix" evidence="2">
    <location>
        <begin position="617"/>
        <end position="631"/>
    </location>
</feature>
<feature type="helix" evidence="2">
    <location>
        <begin position="636"/>
        <end position="651"/>
    </location>
</feature>
<feature type="helix" evidence="2">
    <location>
        <begin position="657"/>
        <end position="660"/>
    </location>
</feature>
<feature type="strand" evidence="2">
    <location>
        <begin position="662"/>
        <end position="665"/>
    </location>
</feature>
<feature type="helix" evidence="2">
    <location>
        <begin position="670"/>
        <end position="672"/>
    </location>
</feature>
<feature type="helix" evidence="2">
    <location>
        <begin position="678"/>
        <end position="688"/>
    </location>
</feature>
<feature type="strand" evidence="2">
    <location>
        <begin position="698"/>
        <end position="705"/>
    </location>
</feature>
<feature type="helix" evidence="2">
    <location>
        <begin position="710"/>
        <end position="712"/>
    </location>
</feature>
<feature type="strand" evidence="2">
    <location>
        <begin position="714"/>
        <end position="716"/>
    </location>
</feature>
<feature type="helix" evidence="2">
    <location>
        <begin position="717"/>
        <end position="719"/>
    </location>
</feature>
<feature type="turn" evidence="2">
    <location>
        <begin position="722"/>
        <end position="724"/>
    </location>
</feature>
<feature type="helix" evidence="2">
    <location>
        <begin position="729"/>
        <end position="734"/>
    </location>
</feature>
<feature type="helix" evidence="2">
    <location>
        <begin position="737"/>
        <end position="746"/>
    </location>
</feature>
<feature type="turn" evidence="2">
    <location>
        <begin position="747"/>
        <end position="749"/>
    </location>
</feature>
<feature type="helix" evidence="2">
    <location>
        <begin position="752"/>
        <end position="754"/>
    </location>
</feature>
<sequence length="771" mass="89400">MIIDADYITEDGKPIIRIFKKEKGEFKVEYDRTFRPYIYALLKDDSAIDEVKKITAERHGKIVRITEVEKVQKKFLGRPIEVWKLYLEHPQDVPAIREKIREHPAVVDIFEYDIPFAKRYLIDKGLTPMEGNEELTFLAVDIETLYHEGEEFGKGPIIMISYADEEGAKVITWKSIDLPYVEVVSSEREMIKRLVKVIREKDPDVIITYNGDNFDFPYLLKRAEKLGIKLPLGRDNSEPKMQRMGDSLAVEIKGRIHFDLFPVIRRTINLPTYTLEAVYEAIFGKSKEKVYAHEIAEAWETGKGLERVAKYSMEDAKVTFELGKEFFPMEAQLARLVGQPVWDVSRSSTGNLVEWFLLRKAYERNELAPNKPDEREYERRLRESYEGGYVKEPEKGLWEGIVSLDFRSLYPSIIITHNVSPDTLNRENCKEYDVAPQVGHRFCKDFPGFIPSLLGNLLEERQKIKKRMKESKDPVEKKLLDYRQRAIKILANSYYGYYGYAKARWYCKECAESVTAWGRQYIDLVRRELESSGFKVLYIDTDGLYATIPGAKPNEIKEKALKFVEYINSKLPGLLELEYEGFYARGFFVTKKKYALIDEEGKIVTRGLEIVRRDWSEIAKETQAKVLEAILKHGNVDEAVKIVKEVTEKLSKYEIPPEKLVIYEQITRPLSEYKAIGPHVAVAKRLAAKGVKVKPGMVIGYIVLRGDGPISKRAIAIEEFDPKKHKYDAEYYIENQVLPAVERILRAFGYRKEDLRYQKTKQVGLGAWLKF</sequence>
<gene>
    <name type="primary">polI</name>
    <name type="synonym">pol</name>
</gene>
<keyword id="KW-0002">3D-structure</keyword>
<keyword id="KW-0235">DNA replication</keyword>
<keyword id="KW-0238">DNA-binding</keyword>
<keyword id="KW-0239">DNA-directed DNA polymerase</keyword>
<keyword id="KW-0548">Nucleotidyltransferase</keyword>
<keyword id="KW-0808">Transferase</keyword>